<proteinExistence type="evidence at protein level"/>
<reference key="1">
    <citation type="journal article" date="1998" name="DNA Res.">
        <title>Structural analysis of Arabidopsis thaliana chromosome 5. VIII. Sequence features of the regions of 1,081,958 bp covered by seventeen physically assigned P1 and TAC clones.</title>
        <authorList>
            <person name="Asamizu E."/>
            <person name="Sato S."/>
            <person name="Kaneko T."/>
            <person name="Nakamura Y."/>
            <person name="Kotani H."/>
            <person name="Miyajima N."/>
            <person name="Tabata S."/>
        </authorList>
    </citation>
    <scope>NUCLEOTIDE SEQUENCE [LARGE SCALE GENOMIC DNA]</scope>
    <source>
        <strain>cv. Columbia</strain>
    </source>
</reference>
<reference key="2">
    <citation type="journal article" date="2017" name="Plant J.">
        <title>Araport11: a complete reannotation of the Arabidopsis thaliana reference genome.</title>
        <authorList>
            <person name="Cheng C.Y."/>
            <person name="Krishnakumar V."/>
            <person name="Chan A.P."/>
            <person name="Thibaud-Nissen F."/>
            <person name="Schobel S."/>
            <person name="Town C.D."/>
        </authorList>
    </citation>
    <scope>GENOME REANNOTATION</scope>
    <source>
        <strain>cv. Columbia</strain>
    </source>
</reference>
<reference key="3">
    <citation type="submission" date="2007-01" db="EMBL/GenBank/DDBJ databases">
        <title>Arabidopsis ORF clones.</title>
        <authorList>
            <person name="Bautista V.R."/>
            <person name="Kim C.J."/>
            <person name="Chen H."/>
            <person name="Wu S.Y."/>
            <person name="De Los Reyes C."/>
            <person name="Ecker J.R."/>
        </authorList>
    </citation>
    <scope>NUCLEOTIDE SEQUENCE [LARGE SCALE MRNA]</scope>
    <source>
        <strain>cv. Columbia</strain>
    </source>
</reference>
<reference key="4">
    <citation type="journal article" date="2007" name="Mol. Cell. Proteomics">
        <title>Multidimensional protein identification technology (MudPIT) analysis of ubiquitinated proteins in plants.</title>
        <authorList>
            <person name="Maor R."/>
            <person name="Jones A."/>
            <person name="Nuehse T.S."/>
            <person name="Studholme D.J."/>
            <person name="Peck S.C."/>
            <person name="Shirasu K."/>
        </authorList>
    </citation>
    <scope>IDENTIFICATION BY MASS SPECTROMETRY [LARGE SCALE ANALYSIS]</scope>
    <source>
        <strain>cv. Landsberg erecta</strain>
    </source>
</reference>
<reference key="5">
    <citation type="journal article" date="2013" name="J. Exp. Bot.">
        <title>Arabidopsis HIT4 encodes a novel chromocentre-localized protein involved in the heat reactivation of transcriptionally silent loci and is essential for heat tolerance in plants.</title>
        <authorList>
            <person name="Wang L.C."/>
            <person name="Wu J.R."/>
            <person name="Chang W.L."/>
            <person name="Yeh C.H."/>
            <person name="Ke Y.T."/>
            <person name="Lu C.A."/>
            <person name="Wu S.J."/>
        </authorList>
    </citation>
    <scope>FUNCTION</scope>
    <scope>DISRUPTION PHENOTYPE</scope>
    <scope>MUTAGENESIS OF SER-227</scope>
    <scope>SUBCELLULAR LOCATION</scope>
    <scope>DEVELOPMENTAL STAGE</scope>
    <source>
        <strain>cv. Columbia</strain>
        <strain>cv. Landsberg erecta</strain>
    </source>
</reference>
<reference key="6">
    <citation type="journal article" date="2015" name="New Phytol.">
        <title>Arabidopsis HIT4, a regulator involved in heat-triggered reorganization of chromatin and release of transcriptional gene silencing, relocates from chromocenters to the nucleolus in response to heat stress.</title>
        <authorList>
            <person name="Wang L.-C."/>
            <person name="Wu J.-R."/>
            <person name="Hsu Y.-J."/>
            <person name="Wu S.-J."/>
        </authorList>
    </citation>
    <scope>FUNCTION</scope>
    <scope>SUBCELLULAR LOCATION</scope>
    <scope>MUTAGENESIS OF SER-227</scope>
    <source>
        <strain>cv. Columbia</strain>
    </source>
</reference>
<dbReference type="EMBL" id="AB016893">
    <property type="protein sequence ID" value="BAB17025.1"/>
    <property type="status" value="ALT_SEQ"/>
    <property type="molecule type" value="Genomic_DNA"/>
</dbReference>
<dbReference type="EMBL" id="CP002688">
    <property type="protein sequence ID" value="AED91481.1"/>
    <property type="molecule type" value="Genomic_DNA"/>
</dbReference>
<dbReference type="EMBL" id="BT029989">
    <property type="protein sequence ID" value="ABN04727.1"/>
    <property type="molecule type" value="mRNA"/>
</dbReference>
<dbReference type="RefSeq" id="NP_196563.2">
    <property type="nucleotide sequence ID" value="NM_121039.5"/>
</dbReference>
<dbReference type="FunCoup" id="A2RVJ8">
    <property type="interactions" value="1024"/>
</dbReference>
<dbReference type="STRING" id="3702.A2RVJ8"/>
<dbReference type="iPTMnet" id="A2RVJ8"/>
<dbReference type="MetOSite" id="A2RVJ8"/>
<dbReference type="PaxDb" id="3702-AT5G10010.1"/>
<dbReference type="ProteomicsDB" id="230337"/>
<dbReference type="DNASU" id="830863"/>
<dbReference type="EnsemblPlants" id="AT5G10010.1">
    <property type="protein sequence ID" value="AT5G10010.1"/>
    <property type="gene ID" value="AT5G10010"/>
</dbReference>
<dbReference type="GeneID" id="830863"/>
<dbReference type="Gramene" id="AT5G10010.1">
    <property type="protein sequence ID" value="AT5G10010.1"/>
    <property type="gene ID" value="AT5G10010"/>
</dbReference>
<dbReference type="KEGG" id="ath:AT5G10010"/>
<dbReference type="Araport" id="AT5G10010"/>
<dbReference type="TAIR" id="AT5G10010">
    <property type="gene designation" value="HIT4"/>
</dbReference>
<dbReference type="eggNOG" id="ENOG502QZIQ">
    <property type="taxonomic scope" value="Eukaryota"/>
</dbReference>
<dbReference type="HOGENOM" id="CLU_042584_2_1_1"/>
<dbReference type="InParanoid" id="A2RVJ8"/>
<dbReference type="OMA" id="GANKIVH"/>
<dbReference type="OrthoDB" id="20554at2759"/>
<dbReference type="PhylomeDB" id="A2RVJ8"/>
<dbReference type="CD-CODE" id="4299E36E">
    <property type="entry name" value="Nucleolus"/>
</dbReference>
<dbReference type="PRO" id="PR:A2RVJ8"/>
<dbReference type="Proteomes" id="UP000006548">
    <property type="component" value="Chromosome 5"/>
</dbReference>
<dbReference type="ExpressionAtlas" id="A2RVJ8">
    <property type="expression patterns" value="baseline and differential"/>
</dbReference>
<dbReference type="GO" id="GO:0010369">
    <property type="term" value="C:chromocenter"/>
    <property type="evidence" value="ECO:0000314"/>
    <property type="project" value="UniProtKB"/>
</dbReference>
<dbReference type="GO" id="GO:0005730">
    <property type="term" value="C:nucleolus"/>
    <property type="evidence" value="ECO:0000314"/>
    <property type="project" value="UniProtKB"/>
</dbReference>
<dbReference type="GO" id="GO:0010286">
    <property type="term" value="P:heat acclimation"/>
    <property type="evidence" value="ECO:0000315"/>
    <property type="project" value="TAIR"/>
</dbReference>
<dbReference type="GO" id="GO:0045814">
    <property type="term" value="P:negative regulation of gene expression, epigenetic"/>
    <property type="evidence" value="ECO:0000315"/>
    <property type="project" value="UniProtKB"/>
</dbReference>
<dbReference type="GO" id="GO:0031452">
    <property type="term" value="P:negative regulation of heterochromatin formation"/>
    <property type="evidence" value="ECO:0000315"/>
    <property type="project" value="GO_Central"/>
</dbReference>
<dbReference type="GO" id="GO:1900034">
    <property type="term" value="P:regulation of cellular response to heat"/>
    <property type="evidence" value="ECO:0007669"/>
    <property type="project" value="InterPro"/>
</dbReference>
<dbReference type="GO" id="GO:0009408">
    <property type="term" value="P:response to heat"/>
    <property type="evidence" value="ECO:0000314"/>
    <property type="project" value="UniProtKB"/>
</dbReference>
<dbReference type="Gene3D" id="6.10.250.2770">
    <property type="match status" value="1"/>
</dbReference>
<dbReference type="InterPro" id="IPR039313">
    <property type="entry name" value="HIT4"/>
</dbReference>
<dbReference type="PANTHER" id="PTHR33704">
    <property type="entry name" value="PROTEIN HEAT INTOLERANT 4-RELATED"/>
    <property type="match status" value="1"/>
</dbReference>
<dbReference type="PANTHER" id="PTHR33704:SF1">
    <property type="entry name" value="PROTEIN HEAT INTOLERANT 4-RELATED"/>
    <property type="match status" value="1"/>
</dbReference>
<name>HIT4_ARATH</name>
<comment type="function">
    <text evidence="4 5">Essential protein required for basal thermotolerance, especially during heat-induced chromocentre decondensation, thus regulating transcriptional gene silencing (TGS).</text>
</comment>
<comment type="subcellular location">
    <subcellularLocation>
        <location evidence="2 4 5">Nucleus</location>
    </subcellularLocation>
    <subcellularLocation>
        <location evidence="5">Nucleus</location>
        <location evidence="5">Nucleolus</location>
    </subcellularLocation>
    <text evidence="4 5">Localizes to the chromocentre at 23 degrees Celsius, a condensed heterochromatin domain that harbors repetitive elements for which transcription is normally suppressed by transcriptional gene silencing (TGS) (PubMed:23408827, PubMed:25329561). Relocates from the chromocenter to the nucleolus in response to heat (30 hours at 37 degrees Celsius or 30 minutes at 44 degrees Celsius), before heat-induced decondensation of chromocenters occurs (PubMed:25329561).</text>
</comment>
<comment type="developmental stage">
    <text evidence="4">Expressed predominately at the early stages during embryogenesis.</text>
</comment>
<comment type="disruption phenotype">
    <text evidence="4">Embryo lethal in homozygous plants. Hypersensitivity to heat leading to the inability to withstand prolonged heat stress (4 days at 37 degrees Celsius), probably due to impaired heat-induced chromocentre decondensation associated with attenuated heat reactivation of various transcriptional gene silencing (TGS) loci.</text>
</comment>
<comment type="sequence caution" evidence="7">
    <conflict type="erroneous gene model prediction">
        <sequence resource="EMBL-CDS" id="BAB17025"/>
    </conflict>
</comment>
<evidence type="ECO:0000255" key="1"/>
<evidence type="ECO:0000255" key="2">
    <source>
        <dbReference type="PROSITE-ProRule" id="PRU00768"/>
    </source>
</evidence>
<evidence type="ECO:0000256" key="3">
    <source>
        <dbReference type="SAM" id="MobiDB-lite"/>
    </source>
</evidence>
<evidence type="ECO:0000269" key="4">
    <source>
    </source>
</evidence>
<evidence type="ECO:0000269" key="5">
    <source>
    </source>
</evidence>
<evidence type="ECO:0000303" key="6">
    <source>
    </source>
</evidence>
<evidence type="ECO:0000305" key="7"/>
<evidence type="ECO:0000312" key="8">
    <source>
        <dbReference type="Araport" id="AT5G10010"/>
    </source>
</evidence>
<evidence type="ECO:0000312" key="9">
    <source>
        <dbReference type="EMBL" id="BAB17025.1"/>
    </source>
</evidence>
<sequence length="434" mass="50517">MKKGAKRKGVSKAGRKAAVAETQNDEVIEETTKTTQEESQQHEEEVVDEVKENGEEEEAKGDQEEEEDAKPDSLEEDEENQEDEVKAEEVKEEVEKKPVARRGGKRKRATKKDTEIKDEKKPVPKAKKPRAAKVKEEPVYFEEKRSLEDLWKVAFPVGTEWDQLDALYEFNWDFQNLEEALEEGGKLYGKKVYVFGCTEPQLVPYKGANKIVHVPAVVVIESPFPPSDKIGITSVQREVEEIIPMKKMKMDWLPYIPIEKRDRQVDKMNSQIFTLGCTQRRSALRHMKEDQLKKFEYCLPYFYQPFKEDELEQSTEVQIMFPSEPPVVCEFDWEFDELQEFVDKLVEEEALPAEQADEFKEYVKEQVRAAKKANREAKDARKKAIEEMSEDTKQAFQKMKFYKFYPQPSPDTPDVSGVQSPFINRYYGKAHEVL</sequence>
<accession>A2RVJ8</accession>
<accession>Q9FIA6</accession>
<gene>
    <name evidence="6" type="primary">HIT4</name>
    <name evidence="8" type="ordered locus">At5g10010</name>
    <name evidence="9" type="ORF">T31P16.7</name>
</gene>
<keyword id="KW-0175">Coiled coil</keyword>
<keyword id="KW-0539">Nucleus</keyword>
<keyword id="KW-1185">Reference proteome</keyword>
<keyword id="KW-0346">Stress response</keyword>
<organism>
    <name type="scientific">Arabidopsis thaliana</name>
    <name type="common">Mouse-ear cress</name>
    <dbReference type="NCBI Taxonomy" id="3702"/>
    <lineage>
        <taxon>Eukaryota</taxon>
        <taxon>Viridiplantae</taxon>
        <taxon>Streptophyta</taxon>
        <taxon>Embryophyta</taxon>
        <taxon>Tracheophyta</taxon>
        <taxon>Spermatophyta</taxon>
        <taxon>Magnoliopsida</taxon>
        <taxon>eudicotyledons</taxon>
        <taxon>Gunneridae</taxon>
        <taxon>Pentapetalae</taxon>
        <taxon>rosids</taxon>
        <taxon>malvids</taxon>
        <taxon>Brassicales</taxon>
        <taxon>Brassicaceae</taxon>
        <taxon>Camelineae</taxon>
        <taxon>Arabidopsis</taxon>
    </lineage>
</organism>
<protein>
    <recommendedName>
        <fullName evidence="6">Protein HEAT INTOLERANT 4</fullName>
    </recommendedName>
</protein>
<feature type="chain" id="PRO_0000441704" description="Protein HEAT INTOLERANT 4">
    <location>
        <begin position="1"/>
        <end position="434"/>
    </location>
</feature>
<feature type="region of interest" description="Disordered" evidence="3">
    <location>
        <begin position="1"/>
        <end position="131"/>
    </location>
</feature>
<feature type="coiled-coil region" evidence="1">
    <location>
        <begin position="363"/>
        <end position="394"/>
    </location>
</feature>
<feature type="short sequence motif" description="Nuclear localization signal 1" evidence="2">
    <location>
        <begin position="1"/>
        <end position="8"/>
    </location>
</feature>
<feature type="short sequence motif" description="Nuclear localization signal 2" evidence="2">
    <location>
        <begin position="95"/>
        <end position="102"/>
    </location>
</feature>
<feature type="short sequence motif" description="Nuclear localization signal 3" evidence="2">
    <location>
        <begin position="370"/>
        <end position="377"/>
    </location>
</feature>
<feature type="compositionally biased region" description="Basic residues" evidence="3">
    <location>
        <begin position="1"/>
        <end position="15"/>
    </location>
</feature>
<feature type="compositionally biased region" description="Basic and acidic residues" evidence="3">
    <location>
        <begin position="30"/>
        <end position="53"/>
    </location>
</feature>
<feature type="compositionally biased region" description="Acidic residues" evidence="3">
    <location>
        <begin position="54"/>
        <end position="82"/>
    </location>
</feature>
<feature type="compositionally biased region" description="Basic and acidic residues" evidence="3">
    <location>
        <begin position="83"/>
        <end position="98"/>
    </location>
</feature>
<feature type="compositionally biased region" description="Basic residues" evidence="3">
    <location>
        <begin position="99"/>
        <end position="110"/>
    </location>
</feature>
<feature type="compositionally biased region" description="Basic and acidic residues" evidence="3">
    <location>
        <begin position="111"/>
        <end position="122"/>
    </location>
</feature>
<feature type="mutagenesis site" description="In hit4-1; hypersensitivity to heat leading to the inability to withstand prolonged heat stress (4 days at 37 degrees Celsius). Reduced relocation from the chromocenter to the nucleolus in response to heat resulting in insufficient decompaction of chromocenters and impaired reactivation of transcriptional gene silencing (TGS)." evidence="4 5">
    <original>S</original>
    <variation>Y</variation>
    <location>
        <position position="227"/>
    </location>
</feature>